<name>PG094_VACCC</name>
<comment type="function">
    <text evidence="1">Component of the entry fusion complex (EFC), which consists of 11 proteins. During cell infection, this complex mediates entry of the virion core into the host cytoplasm by a two-step mechanism consisting of lipid mixing of the viral and cellular membranes and subsequent pore formation.</text>
</comment>
<comment type="subunit">
    <text evidence="1">Interacts with OPG143. Component of the entry fusion complex (EFC) composed of OPG053, OPG076, OPG086, OPG094, OPG095, OPG099, OPG107, OPG143, OPG104, OPG147 and OPG155. Except for OPG095 and OPG053, each of the EFC proteins is required for assembly or stability of the complex.</text>
</comment>
<comment type="subcellular location">
    <subcellularLocation>
        <location evidence="1">Virion membrane</location>
        <topology evidence="1">Single-pass type II membrane protein</topology>
    </subcellularLocation>
    <text evidence="1">Component of the mature virion (MV) membrane. The mature virion is located in the cytoplasm of infected cells and is probably released by cell lysis.</text>
</comment>
<comment type="induction">
    <text evidence="1">Expressed in the late phase of the viral replicative cycle.</text>
</comment>
<comment type="PTM">
    <text evidence="1">Unglycosylated because produced in viral factories instead of the classic ER -Golgi route.</text>
</comment>
<comment type="similarity">
    <text evidence="5">Belongs to the orthopoxvirus OPG086 family.</text>
</comment>
<sequence>MGGGVSVELPKRDPPPGVPTDEMLLNVDKMHDVIAPAKLLEYVHIGPLAKDKEDKVKKRYPEFRLVNTGPGGLSALLRQSYNGTAPNCCRTFNRTHYWKKDGKISDKYEEGAVLESCWPDVHDTGKCDVDLFDWCQGDTFDRNICHQWIGSAFNRSNRTVEGQQSLINLYNKMQTLCSKDASVPICESFLHHLRAHNTEDSKEMIDYILRQQSADFKQKYMRCSYPTRDKLEESLKYAEPRECWDPECSNANVNFLLTRNYNNLGLCNIVRCNTSVNNLQMDKTSSLRLSCGLSNSDRFSTVPVNRAKVVQHNIKHSFDLKLHLISLLSLLVIWILIVAI</sequence>
<accession>P21030</accession>
<organism>
    <name type="scientific">Vaccinia virus (strain Copenhagen)</name>
    <name type="common">VACV</name>
    <dbReference type="NCBI Taxonomy" id="10249"/>
    <lineage>
        <taxon>Viruses</taxon>
        <taxon>Varidnaviria</taxon>
        <taxon>Bamfordvirae</taxon>
        <taxon>Nucleocytoviricota</taxon>
        <taxon>Pokkesviricetes</taxon>
        <taxon>Chitovirales</taxon>
        <taxon>Poxviridae</taxon>
        <taxon>Chordopoxvirinae</taxon>
        <taxon>Orthopoxvirus</taxon>
        <taxon>Vaccinia virus</taxon>
    </lineage>
</organism>
<organismHost>
    <name type="scientific">Homo sapiens</name>
    <name type="common">Human</name>
    <dbReference type="NCBI Taxonomy" id="9606"/>
</organismHost>
<protein>
    <recommendedName>
        <fullName>Entry-fusion complex protein OPG094</fullName>
        <shortName>EFC protein OPG094</shortName>
    </recommendedName>
    <alternativeName>
        <fullName>Myristoylated protein G9</fullName>
    </alternativeName>
</protein>
<dbReference type="EMBL" id="M35027">
    <property type="protein sequence ID" value="AAA48075.1"/>
    <property type="molecule type" value="Genomic_DNA"/>
</dbReference>
<dbReference type="PIR" id="E42512">
    <property type="entry name" value="QQVZP1"/>
</dbReference>
<dbReference type="SMR" id="P21030"/>
<dbReference type="ELM" id="P21030"/>
<dbReference type="iPTMnet" id="P21030"/>
<dbReference type="Proteomes" id="UP000008269">
    <property type="component" value="Segment"/>
</dbReference>
<dbReference type="GO" id="GO:0016020">
    <property type="term" value="C:membrane"/>
    <property type="evidence" value="ECO:0007669"/>
    <property type="project" value="UniProtKB-KW"/>
</dbReference>
<dbReference type="GO" id="GO:0019031">
    <property type="term" value="C:viral envelope"/>
    <property type="evidence" value="ECO:0007669"/>
    <property type="project" value="UniProtKB-KW"/>
</dbReference>
<dbReference type="GO" id="GO:0055036">
    <property type="term" value="C:virion membrane"/>
    <property type="evidence" value="ECO:0007669"/>
    <property type="project" value="UniProtKB-SubCell"/>
</dbReference>
<dbReference type="GO" id="GO:0019064">
    <property type="term" value="P:fusion of virus membrane with host plasma membrane"/>
    <property type="evidence" value="ECO:0007669"/>
    <property type="project" value="UniProtKB-KW"/>
</dbReference>
<dbReference type="GO" id="GO:0046718">
    <property type="term" value="P:symbiont entry into host cell"/>
    <property type="evidence" value="ECO:0007669"/>
    <property type="project" value="UniProtKB-KW"/>
</dbReference>
<dbReference type="InterPro" id="IPR004251">
    <property type="entry name" value="Pox_virus_G9/A16"/>
</dbReference>
<dbReference type="Pfam" id="PF03003">
    <property type="entry name" value="Pox_G9-A16"/>
    <property type="match status" value="1"/>
</dbReference>
<keyword id="KW-1169">Fusion of virus membrane with host cell membrane</keyword>
<keyword id="KW-1168">Fusion of virus membrane with host membrane</keyword>
<keyword id="KW-0426">Late protein</keyword>
<keyword id="KW-0449">Lipoprotein</keyword>
<keyword id="KW-0472">Membrane</keyword>
<keyword id="KW-0519">Myristate</keyword>
<keyword id="KW-1185">Reference proteome</keyword>
<keyword id="KW-0735">Signal-anchor</keyword>
<keyword id="KW-0812">Transmembrane</keyword>
<keyword id="KW-1133">Transmembrane helix</keyword>
<keyword id="KW-0261">Viral envelope protein</keyword>
<keyword id="KW-1162">Viral penetration into host cytoplasm</keyword>
<keyword id="KW-0946">Virion</keyword>
<keyword id="KW-1160">Virus entry into host cell</keyword>
<reference key="1">
    <citation type="journal article" date="1990" name="Virology">
        <title>The complete DNA sequence of vaccinia virus.</title>
        <authorList>
            <person name="Goebel S.J."/>
            <person name="Johnson G.P."/>
            <person name="Perkus M.E."/>
            <person name="Davis S.W."/>
            <person name="Winslow J.P."/>
            <person name="Paoletti E."/>
        </authorList>
    </citation>
    <scope>NUCLEOTIDE SEQUENCE [LARGE SCALE GENOMIC DNA]</scope>
</reference>
<reference key="2">
    <citation type="journal article" date="1990" name="Virology">
        <title>Appendix to 'The complete DNA sequence of vaccinia virus'.</title>
        <authorList>
            <person name="Goebel S.J."/>
            <person name="Johnson G.P."/>
            <person name="Perkus M.E."/>
            <person name="Davis S.W."/>
            <person name="Winslow J.P."/>
            <person name="Paoletti E."/>
        </authorList>
    </citation>
    <scope>NUCLEOTIDE SEQUENCE [LARGE SCALE GENOMIC DNA]</scope>
</reference>
<reference key="3">
    <citation type="journal article" date="1997" name="J. Virol.">
        <title>Identification and analysis of three myristylated vaccinia virus late proteins.</title>
        <authorList>
            <person name="Martin K.H."/>
            <person name="Grosenbach D.W."/>
            <person name="Franke C.A."/>
            <person name="Hruby D.E."/>
        </authorList>
    </citation>
    <scope>MYRISTOYLATION AT GLY-2</scope>
    <scope>MUTAGENESIS OF GLY-2</scope>
</reference>
<gene>
    <name type="primary">OPG094</name>
    <name type="ORF">G9R</name>
</gene>
<feature type="initiator methionine" description="Removed; by host">
    <location>
        <position position="1"/>
    </location>
</feature>
<feature type="chain" id="PRO_0000099541" description="Entry-fusion complex protein OPG094">
    <location>
        <begin position="2"/>
        <end position="340"/>
    </location>
</feature>
<feature type="topological domain" description="Virion surface">
    <location>
        <begin position="2"/>
        <end position="319"/>
    </location>
</feature>
<feature type="transmembrane region" description="Helical; Signal-anchor for type II membrane protein" evidence="2">
    <location>
        <begin position="320"/>
        <end position="340"/>
    </location>
</feature>
<feature type="region of interest" description="Disordered" evidence="3">
    <location>
        <begin position="1"/>
        <end position="20"/>
    </location>
</feature>
<feature type="lipid moiety-binding region" description="N-myristoyl glycine; by host" evidence="4">
    <location>
        <position position="2"/>
    </location>
</feature>
<feature type="mutagenesis site" description="Complete loss of myristoylation." evidence="4">
    <original>G</original>
    <variation>A</variation>
    <location>
        <position position="2"/>
    </location>
</feature>
<proteinExistence type="evidence at protein level"/>
<evidence type="ECO:0000250" key="1">
    <source>
        <dbReference type="UniProtKB" id="P07611"/>
    </source>
</evidence>
<evidence type="ECO:0000255" key="2"/>
<evidence type="ECO:0000256" key="3">
    <source>
        <dbReference type="SAM" id="MobiDB-lite"/>
    </source>
</evidence>
<evidence type="ECO:0000269" key="4">
    <source>
    </source>
</evidence>
<evidence type="ECO:0000305" key="5"/>